<proteinExistence type="evidence at protein level"/>
<sequence>MDLPPALLSFYCPIASEVSPEHEAVAQEMYAWIHAMSLTSDNRQAKMLAQAGAGFNSYFTPRARGELARALSKYNVCAWIANGMVQEIRDPGTFGAMAARWARIMEEPATCPADGIPMDFALADAFSHIRRTLSPVKWQHFSAAQSHWMHGLAWENCLHQVKGLTVHDYLSFRYVMSGCFAAAAFAYAVPERHPSAEEWAHPKVRAAADAAMMVDALDNDRYSYLKESLTEADKKTIFAALRHENPALGREEVIVRGVQLRDRILTLYLTLRGELLCDASEGLRSYLTGLDLIIAGNLVFCADMGLRYGLPEGSVRTDAEPLDRTVAPPGIGAIDHWWAQAGA</sequence>
<feature type="chain" id="PRO_0000435482" description="Diterpene cyclase DtcycB">
    <location>
        <begin position="1"/>
        <end position="343"/>
    </location>
</feature>
<feature type="binding site" evidence="1">
    <location>
        <position position="219"/>
    </location>
    <ligand>
        <name>Mg(2+)</name>
        <dbReference type="ChEBI" id="CHEBI:18420"/>
    </ligand>
</feature>
<feature type="binding site" evidence="1">
    <location>
        <position position="223"/>
    </location>
    <ligand>
        <name>Mg(2+)</name>
        <dbReference type="ChEBI" id="CHEBI:18420"/>
    </ligand>
</feature>
<feature type="binding site" evidence="1">
    <location>
        <position position="227"/>
    </location>
    <ligand>
        <name>Mg(2+)</name>
        <dbReference type="ChEBI" id="CHEBI:18420"/>
    </ligand>
</feature>
<protein>
    <recommendedName>
        <fullName evidence="3">Diterpene cyclase DtcycB</fullName>
    </recommendedName>
    <alternativeName>
        <fullName evidence="4">Cembrene A synthase</fullName>
        <ecNumber evidence="2">4.2.3.150</ecNumber>
    </alternativeName>
    <alternativeName>
        <fullName evidence="4">Nephthenol synthase</fullName>
        <ecNumber evidence="2">4.2.3.149</ecNumber>
    </alternativeName>
    <alternativeName>
        <fullName evidence="4">Pentamethylcyclopentadecatrienol synthase</fullName>
        <ecNumber evidence="2">4.2.3.151</ecNumber>
    </alternativeName>
</protein>
<accession>M1VDX3</accession>
<gene>
    <name evidence="3" type="primary">dtcycB</name>
</gene>
<name>DTCYB_STRSQ</name>
<reference key="1">
    <citation type="journal article" date="2013" name="ChemBioChem">
        <title>Identification and characterization of bacterial diterpene cyclases that synthesize the cembrane skeleton.</title>
        <authorList>
            <person name="Meguro A."/>
            <person name="Tomita T."/>
            <person name="Nishiyama M."/>
            <person name="Kuzuyama T."/>
        </authorList>
    </citation>
    <scope>NUCLEOTIDE SEQUENCE [GENOMIC DNA]</scope>
    <scope>FUNCTION</scope>
    <scope>CATALYTIC ACTIVITY</scope>
    <scope>COFACTOR</scope>
    <scope>BIOPHYSICOCHEMICAL PROPERTIES</scope>
    <scope>SUBUNIT</scope>
    <source>
        <strain>SANK 60404</strain>
    </source>
</reference>
<evidence type="ECO:0000250" key="1">
    <source>
        <dbReference type="UniProtKB" id="Q9UR08"/>
    </source>
</evidence>
<evidence type="ECO:0000269" key="2">
    <source>
    </source>
</evidence>
<evidence type="ECO:0000303" key="3">
    <source>
    </source>
</evidence>
<evidence type="ECO:0000305" key="4"/>
<keyword id="KW-0456">Lyase</keyword>
<keyword id="KW-0460">Magnesium</keyword>
<keyword id="KW-0479">Metal-binding</keyword>
<dbReference type="EC" id="4.2.3.150" evidence="2"/>
<dbReference type="EC" id="4.2.3.149" evidence="2"/>
<dbReference type="EC" id="4.2.3.151" evidence="2"/>
<dbReference type="EMBL" id="AB738085">
    <property type="protein sequence ID" value="BAM78698.1"/>
    <property type="molecule type" value="Genomic_DNA"/>
</dbReference>
<dbReference type="SMR" id="M1VDX3"/>
<dbReference type="KEGG" id="ag:BAM78698"/>
<dbReference type="BRENDA" id="4.2.3.149">
    <property type="organism ID" value="1284"/>
</dbReference>
<dbReference type="BRENDA" id="4.2.3.150">
    <property type="organism ID" value="1284"/>
</dbReference>
<dbReference type="BRENDA" id="4.2.3.151">
    <property type="organism ID" value="1284"/>
</dbReference>
<dbReference type="GO" id="GO:0046872">
    <property type="term" value="F:metal ion binding"/>
    <property type="evidence" value="ECO:0007669"/>
    <property type="project" value="UniProtKB-KW"/>
</dbReference>
<dbReference type="GO" id="GO:0010333">
    <property type="term" value="F:terpene synthase activity"/>
    <property type="evidence" value="ECO:0000314"/>
    <property type="project" value="UniProtKB"/>
</dbReference>
<dbReference type="Gene3D" id="1.10.600.10">
    <property type="entry name" value="Farnesyl Diphosphate Synthase"/>
    <property type="match status" value="1"/>
</dbReference>
<dbReference type="InterPro" id="IPR008949">
    <property type="entry name" value="Isoprenoid_synthase_dom_sf"/>
</dbReference>
<dbReference type="Pfam" id="PF19086">
    <property type="entry name" value="Terpene_syn_C_2"/>
    <property type="match status" value="1"/>
</dbReference>
<dbReference type="SUPFAM" id="SSF48576">
    <property type="entry name" value="Terpenoid synthases"/>
    <property type="match status" value="1"/>
</dbReference>
<comment type="function">
    <text evidence="2">Diterpene cyclases that can form multiple diterpene products.</text>
</comment>
<comment type="catalytic activity">
    <reaction evidence="2">
        <text>(2E,6E,10E)-geranylgeranyl diphosphate + H2O = (R)-nephthenol + diphosphate</text>
        <dbReference type="Rhea" id="RHEA:42992"/>
        <dbReference type="ChEBI" id="CHEBI:15377"/>
        <dbReference type="ChEBI" id="CHEBI:33019"/>
        <dbReference type="ChEBI" id="CHEBI:58756"/>
        <dbReference type="ChEBI" id="CHEBI:82799"/>
        <dbReference type="EC" id="4.2.3.149"/>
    </reaction>
</comment>
<comment type="catalytic activity">
    <reaction evidence="2">
        <text>(2E,6E,10E)-geranylgeranyl diphosphate = (R)-cembrene A + diphosphate</text>
        <dbReference type="Rhea" id="RHEA:42996"/>
        <dbReference type="ChEBI" id="CHEBI:33019"/>
        <dbReference type="ChEBI" id="CHEBI:58756"/>
        <dbReference type="ChEBI" id="CHEBI:82800"/>
        <dbReference type="EC" id="4.2.3.150"/>
    </reaction>
</comment>
<comment type="catalytic activity">
    <reaction evidence="2">
        <text>(2E,6E,10E)-geranylgeranyl diphosphate + H2O = (1S,4E,8E,12E)-2,2,5,9,13-pentamethylcyclopentadeca-4,8,12-trien-1-ol + diphosphate</text>
        <dbReference type="Rhea" id="RHEA:43000"/>
        <dbReference type="ChEBI" id="CHEBI:15377"/>
        <dbReference type="ChEBI" id="CHEBI:33019"/>
        <dbReference type="ChEBI" id="CHEBI:58756"/>
        <dbReference type="ChEBI" id="CHEBI:82801"/>
        <dbReference type="EC" id="4.2.3.151"/>
    </reaction>
</comment>
<comment type="cofactor">
    <cofactor evidence="2">
        <name>Mg(2+)</name>
        <dbReference type="ChEBI" id="CHEBI:18420"/>
    </cofactor>
</comment>
<comment type="biophysicochemical properties">
    <kinetics>
        <KM evidence="2">42.1 uM for geranylgeranyl diphosphate</KM>
        <text evidence="2">kcat is 1.3 min(-1).</text>
    </kinetics>
</comment>
<comment type="subunit">
    <text evidence="2">Homodimer.</text>
</comment>
<comment type="similarity">
    <text evidence="4">Belongs to the terpene synthase family.</text>
</comment>
<organism>
    <name type="scientific">Streptomyces sp</name>
    <dbReference type="NCBI Taxonomy" id="1931"/>
    <lineage>
        <taxon>Bacteria</taxon>
        <taxon>Bacillati</taxon>
        <taxon>Actinomycetota</taxon>
        <taxon>Actinomycetes</taxon>
        <taxon>Kitasatosporales</taxon>
        <taxon>Streptomycetaceae</taxon>
        <taxon>Streptomyces</taxon>
    </lineage>
</organism>